<protein>
    <recommendedName>
        <fullName>Putative steroid dehydrogenase 2</fullName>
        <ecNumber>1.1.1.-</ecNumber>
    </recommendedName>
</protein>
<accession>O17795</accession>
<dbReference type="EC" id="1.1.1.-"/>
<dbReference type="EMBL" id="Z92830">
    <property type="protein sequence ID" value="CAB07363.1"/>
    <property type="molecule type" value="Genomic_DNA"/>
</dbReference>
<dbReference type="PIR" id="T20756">
    <property type="entry name" value="T20756"/>
</dbReference>
<dbReference type="RefSeq" id="NP_507092.1">
    <property type="nucleotide sequence ID" value="NM_074691.2"/>
</dbReference>
<dbReference type="SMR" id="O17795"/>
<dbReference type="FunCoup" id="O17795">
    <property type="interactions" value="2228"/>
</dbReference>
<dbReference type="STRING" id="6239.F11A5.12.1"/>
<dbReference type="PaxDb" id="6239-F11A5.12"/>
<dbReference type="PeptideAtlas" id="O17795"/>
<dbReference type="EnsemblMetazoa" id="F11A5.12.1">
    <property type="protein sequence ID" value="F11A5.12.1"/>
    <property type="gene ID" value="WBGene00008678"/>
</dbReference>
<dbReference type="GeneID" id="184337"/>
<dbReference type="KEGG" id="cel:CELE_F11A5.12"/>
<dbReference type="UCSC" id="F11A5.12">
    <property type="organism name" value="c. elegans"/>
</dbReference>
<dbReference type="AGR" id="WB:WBGene00008678"/>
<dbReference type="CTD" id="184337"/>
<dbReference type="WormBase" id="F11A5.12">
    <property type="protein sequence ID" value="CE15790"/>
    <property type="gene ID" value="WBGene00008678"/>
    <property type="gene designation" value="stdh-2"/>
</dbReference>
<dbReference type="eggNOG" id="KOG1014">
    <property type="taxonomic scope" value="Eukaryota"/>
</dbReference>
<dbReference type="GeneTree" id="ENSGT00940000165708"/>
<dbReference type="HOGENOM" id="CLU_010194_38_0_1"/>
<dbReference type="InParanoid" id="O17795"/>
<dbReference type="OMA" id="HTCGHWL"/>
<dbReference type="OrthoDB" id="5545019at2759"/>
<dbReference type="PhylomeDB" id="O17795"/>
<dbReference type="PRO" id="PR:O17795"/>
<dbReference type="Proteomes" id="UP000001940">
    <property type="component" value="Chromosome V"/>
</dbReference>
<dbReference type="Bgee" id="WBGene00008678">
    <property type="expression patterns" value="Expressed in larva and 1 other cell type or tissue"/>
</dbReference>
<dbReference type="GO" id="GO:0005783">
    <property type="term" value="C:endoplasmic reticulum"/>
    <property type="evidence" value="ECO:0000318"/>
    <property type="project" value="GO_Central"/>
</dbReference>
<dbReference type="GO" id="GO:0016491">
    <property type="term" value="F:oxidoreductase activity"/>
    <property type="evidence" value="ECO:0007669"/>
    <property type="project" value="UniProtKB-KW"/>
</dbReference>
<dbReference type="GO" id="GO:0030497">
    <property type="term" value="P:fatty acid elongation"/>
    <property type="evidence" value="ECO:0000318"/>
    <property type="project" value="GO_Central"/>
</dbReference>
<dbReference type="GO" id="GO:0006694">
    <property type="term" value="P:steroid biosynthetic process"/>
    <property type="evidence" value="ECO:0007669"/>
    <property type="project" value="UniProtKB-KW"/>
</dbReference>
<dbReference type="CDD" id="cd05356">
    <property type="entry name" value="17beta-HSD1_like_SDR_c"/>
    <property type="match status" value="1"/>
</dbReference>
<dbReference type="FunFam" id="3.40.50.720:FF:000467">
    <property type="entry name" value="Steroid dehydrogenase 4"/>
    <property type="match status" value="1"/>
</dbReference>
<dbReference type="Gene3D" id="3.40.50.720">
    <property type="entry name" value="NAD(P)-binding Rossmann-like Domain"/>
    <property type="match status" value="1"/>
</dbReference>
<dbReference type="InterPro" id="IPR036291">
    <property type="entry name" value="NAD(P)-bd_dom_sf"/>
</dbReference>
<dbReference type="InterPro" id="IPR020904">
    <property type="entry name" value="Sc_DH/Rdtase_CS"/>
</dbReference>
<dbReference type="InterPro" id="IPR002347">
    <property type="entry name" value="SDR_fam"/>
</dbReference>
<dbReference type="PANTHER" id="PTHR43086:SF1">
    <property type="entry name" value="STEROID DEHYDROGENASE 1-RELATED"/>
    <property type="match status" value="1"/>
</dbReference>
<dbReference type="PANTHER" id="PTHR43086">
    <property type="entry name" value="VERY-LONG-CHAIN 3-OXOOACYL-COA REDUCTASE"/>
    <property type="match status" value="1"/>
</dbReference>
<dbReference type="Pfam" id="PF00106">
    <property type="entry name" value="adh_short"/>
    <property type="match status" value="1"/>
</dbReference>
<dbReference type="PIRSF" id="PIRSF000126">
    <property type="entry name" value="11-beta-HSD1"/>
    <property type="match status" value="1"/>
</dbReference>
<dbReference type="PRINTS" id="PR00081">
    <property type="entry name" value="GDHRDH"/>
</dbReference>
<dbReference type="PRINTS" id="PR00080">
    <property type="entry name" value="SDRFAMILY"/>
</dbReference>
<dbReference type="SUPFAM" id="SSF51735">
    <property type="entry name" value="NAD(P)-binding Rossmann-fold domains"/>
    <property type="match status" value="1"/>
</dbReference>
<dbReference type="PROSITE" id="PS00061">
    <property type="entry name" value="ADH_SHORT"/>
    <property type="match status" value="1"/>
</dbReference>
<feature type="chain" id="PRO_0000054581" description="Putative steroid dehydrogenase 2">
    <location>
        <begin position="1"/>
        <end position="315"/>
    </location>
</feature>
<feature type="active site" evidence="1">
    <location>
        <position position="202"/>
    </location>
</feature>
<feature type="binding site" evidence="1">
    <location>
        <begin position="47"/>
        <end position="76"/>
    </location>
    <ligand>
        <name>NADP(+)</name>
        <dbReference type="ChEBI" id="CHEBI:58349"/>
    </ligand>
</feature>
<proteinExistence type="inferred from homology"/>
<organism>
    <name type="scientific">Caenorhabditis elegans</name>
    <dbReference type="NCBI Taxonomy" id="6239"/>
    <lineage>
        <taxon>Eukaryota</taxon>
        <taxon>Metazoa</taxon>
        <taxon>Ecdysozoa</taxon>
        <taxon>Nematoda</taxon>
        <taxon>Chromadorea</taxon>
        <taxon>Rhabditida</taxon>
        <taxon>Rhabditina</taxon>
        <taxon>Rhabditomorpha</taxon>
        <taxon>Rhabditoidea</taxon>
        <taxon>Rhabditidae</taxon>
        <taxon>Peloderinae</taxon>
        <taxon>Caenorhabditis</taxon>
    </lineage>
</organism>
<keyword id="KW-0444">Lipid biosynthesis</keyword>
<keyword id="KW-0443">Lipid metabolism</keyword>
<keyword id="KW-0521">NADP</keyword>
<keyword id="KW-0560">Oxidoreductase</keyword>
<keyword id="KW-1185">Reference proteome</keyword>
<keyword id="KW-0752">Steroid biosynthesis</keyword>
<name>STDH2_CAEEL</name>
<comment type="similarity">
    <text evidence="2">Belongs to the short-chain dehydrogenases/reductases (SDR) family. 17-beta-HSD 3 subfamily.</text>
</comment>
<gene>
    <name type="primary">stdh-2</name>
    <name type="ORF">F11A5.12</name>
</gene>
<reference key="1">
    <citation type="journal article" date="1998" name="Science">
        <title>Genome sequence of the nematode C. elegans: a platform for investigating biology.</title>
        <authorList>
            <consortium name="The C. elegans sequencing consortium"/>
        </authorList>
    </citation>
    <scope>NUCLEOTIDE SEQUENCE [LARGE SCALE GENOMIC DNA]</scope>
    <source>
        <strain>Bristol N2</strain>
    </source>
</reference>
<evidence type="ECO:0000250" key="1"/>
<evidence type="ECO:0000305" key="2"/>
<sequence length="315" mass="34872">MDIQWFATGVGAAVVLYIFYHFIRIILNILVPYAFCQPIDLKKKAGASWAVVTGATDGIGKSYSFELARRGFNVYIVSRTQSKLEQTKKDILEKQPDIEVRFATYDFTNPSVTDYEKLLSKLNEVSVGILINNVGMFFDYPEMLHKINGGIDSIANVIIINTLPATLLSAGILPQMVSRKAGIIVNIGSFAGVVKLAEWSIYSATKKYVEWLTGCLRKEYSHHGIIFQAITPAMVATKMAGNPNTSFFCPDSDTFARSALNTIGHASETTGYIAHQIQCEILKLLPDFVIDRSIKKGNAEFREKALAKSENKPLA</sequence>